<feature type="chain" id="PRO_0000188762" description="1,4-alpha-glucan branching enzyme GlgB">
    <location>
        <begin position="1"/>
        <end position="715"/>
    </location>
</feature>
<feature type="active site" description="Nucleophile" evidence="1">
    <location>
        <position position="396"/>
    </location>
</feature>
<feature type="active site" description="Proton donor" evidence="1">
    <location>
        <position position="449"/>
    </location>
</feature>
<proteinExistence type="inferred from homology"/>
<keyword id="KW-0119">Carbohydrate metabolism</keyword>
<keyword id="KW-0320">Glycogen biosynthesis</keyword>
<keyword id="KW-0321">Glycogen metabolism</keyword>
<keyword id="KW-0328">Glycosyltransferase</keyword>
<keyword id="KW-0808">Transferase</keyword>
<sequence>MFEKLSQAACSEPFAFLGPFIDPTQGALRVWMPGATGVALVLEGQPRIALEREKESAFILKADLNLHLTHYQLAIDWNGVEQLVDDPYQYHGIYAEYDDLHTPKTMYQHMGSQFMTLERDGKSISGIRFLVYAPHATAVSLVGSFNDWDGRRHPMQRLDYGIWGLFIPDLAEGVSYKFEMKGPKGEGLPHKADPWGFYAEQYPSFASVTYDHARYQWQDAQWQTRPVTEKRKEALSFYELHAGSWKRNEQGEFLNYRELAAELVPYLVDMGYTHVELMPVSEHPFYGSWGYQPVGLFAPTSRYGSPDDFKFFVDACHQAGIGVVLDWVPAHFPSDDHGLANFDGTPLFHDPDPRRGWHQDWNSFIYDLGREQVRRFLVSNALYWFEQFHIDGIRVDAVASMLYLDYSRSHGQWIPNMDGGNENYDAIATLKWMNEEVYKYFPNAMTIAEESTAFPGVSAPTFMGGLGFGFKWNMGWMHDSLSYIKEEPVHRKYHHNTLTFPLVYAHSENYVLSLSHDEVVYGKGSIHNKMPGDEWQQTANLRAYFGYMYGQPGKKLNFMGAEIGQTAEWNHDDQLQWFLLDFPRHQGVQALTRDLNHLYRNQAALHDQDCIPAGFEWRLQDAAEQSIIAHERISEAGERILVVSNFTPVPRDEFRLGVPNKGRYQLLLNTDDSKYAGSGYEVVVDAKSEAVVSEDLAQSIVLRLPPLSTLFYKLV</sequence>
<comment type="function">
    <text evidence="1">Catalyzes the formation of the alpha-1,6-glucosidic linkages in glycogen by scission of a 1,4-alpha-linked oligosaccharide from growing alpha-1,4-glucan chains and the subsequent attachment of the oligosaccharide to the alpha-1,6 position.</text>
</comment>
<comment type="catalytic activity">
    <reaction evidence="1">
        <text>Transfers a segment of a (1-&gt;4)-alpha-D-glucan chain to a primary hydroxy group in a similar glucan chain.</text>
        <dbReference type="EC" id="2.4.1.18"/>
    </reaction>
</comment>
<comment type="pathway">
    <text evidence="1">Glycan biosynthesis; glycogen biosynthesis.</text>
</comment>
<comment type="subunit">
    <text evidence="1">Monomer.</text>
</comment>
<comment type="similarity">
    <text evidence="1">Belongs to the glycosyl hydrolase 13 family. GlgB subfamily.</text>
</comment>
<protein>
    <recommendedName>
        <fullName evidence="1">1,4-alpha-glucan branching enzyme GlgB</fullName>
        <ecNumber evidence="1">2.4.1.18</ecNumber>
    </recommendedName>
    <alternativeName>
        <fullName evidence="1">1,4-alpha-D-glucan:1,4-alpha-D-glucan 6-glucosyl-transferase</fullName>
    </alternativeName>
    <alternativeName>
        <fullName evidence="1">Alpha-(1-&gt;4)-glucan branching enzyme</fullName>
    </alternativeName>
    <alternativeName>
        <fullName evidence="1">Glycogen branching enzyme</fullName>
        <shortName evidence="1">BE</shortName>
    </alternativeName>
</protein>
<dbReference type="EC" id="2.4.1.18" evidence="1"/>
<dbReference type="EMBL" id="AE016796">
    <property type="protein sequence ID" value="AAO08146.1"/>
    <property type="molecule type" value="Genomic_DNA"/>
</dbReference>
<dbReference type="SMR" id="Q8D4P0"/>
<dbReference type="CAZy" id="CBM48">
    <property type="family name" value="Carbohydrate-Binding Module Family 48"/>
</dbReference>
<dbReference type="CAZy" id="GH13">
    <property type="family name" value="Glycoside Hydrolase Family 13"/>
</dbReference>
<dbReference type="KEGG" id="vvu:VV2_1252"/>
<dbReference type="HOGENOM" id="CLU_004245_3_2_6"/>
<dbReference type="UniPathway" id="UPA00164"/>
<dbReference type="Proteomes" id="UP000002275">
    <property type="component" value="Chromosome 2"/>
</dbReference>
<dbReference type="GO" id="GO:0005829">
    <property type="term" value="C:cytosol"/>
    <property type="evidence" value="ECO:0007669"/>
    <property type="project" value="TreeGrafter"/>
</dbReference>
<dbReference type="GO" id="GO:0003844">
    <property type="term" value="F:1,4-alpha-glucan branching enzyme activity"/>
    <property type="evidence" value="ECO:0007669"/>
    <property type="project" value="UniProtKB-UniRule"/>
</dbReference>
<dbReference type="GO" id="GO:0043169">
    <property type="term" value="F:cation binding"/>
    <property type="evidence" value="ECO:0007669"/>
    <property type="project" value="InterPro"/>
</dbReference>
<dbReference type="GO" id="GO:0004553">
    <property type="term" value="F:hydrolase activity, hydrolyzing O-glycosyl compounds"/>
    <property type="evidence" value="ECO:0007669"/>
    <property type="project" value="InterPro"/>
</dbReference>
<dbReference type="GO" id="GO:0005978">
    <property type="term" value="P:glycogen biosynthetic process"/>
    <property type="evidence" value="ECO:0007669"/>
    <property type="project" value="UniProtKB-UniRule"/>
</dbReference>
<dbReference type="CDD" id="cd11322">
    <property type="entry name" value="AmyAc_Glg_BE"/>
    <property type="match status" value="1"/>
</dbReference>
<dbReference type="CDD" id="cd02855">
    <property type="entry name" value="E_set_GBE_prok_N"/>
    <property type="match status" value="1"/>
</dbReference>
<dbReference type="FunFam" id="2.60.40.1180:FF:000002">
    <property type="entry name" value="1,4-alpha-glucan branching enzyme GlgB"/>
    <property type="match status" value="1"/>
</dbReference>
<dbReference type="FunFam" id="3.20.20.80:FF:000003">
    <property type="entry name" value="1,4-alpha-glucan branching enzyme GlgB"/>
    <property type="match status" value="1"/>
</dbReference>
<dbReference type="Gene3D" id="3.20.20.80">
    <property type="entry name" value="Glycosidases"/>
    <property type="match status" value="1"/>
</dbReference>
<dbReference type="Gene3D" id="2.60.40.1180">
    <property type="entry name" value="Golgi alpha-mannosidase II"/>
    <property type="match status" value="1"/>
</dbReference>
<dbReference type="Gene3D" id="2.60.40.10">
    <property type="entry name" value="Immunoglobulins"/>
    <property type="match status" value="2"/>
</dbReference>
<dbReference type="HAMAP" id="MF_00685">
    <property type="entry name" value="GlgB"/>
    <property type="match status" value="1"/>
</dbReference>
<dbReference type="InterPro" id="IPR006048">
    <property type="entry name" value="A-amylase/branching_C"/>
</dbReference>
<dbReference type="InterPro" id="IPR037439">
    <property type="entry name" value="Branching_enzy"/>
</dbReference>
<dbReference type="InterPro" id="IPR006407">
    <property type="entry name" value="GlgB"/>
</dbReference>
<dbReference type="InterPro" id="IPR054169">
    <property type="entry name" value="GlgB_N"/>
</dbReference>
<dbReference type="InterPro" id="IPR044143">
    <property type="entry name" value="GlgB_N_E_set_prok"/>
</dbReference>
<dbReference type="InterPro" id="IPR006047">
    <property type="entry name" value="Glyco_hydro_13_cat_dom"/>
</dbReference>
<dbReference type="InterPro" id="IPR004193">
    <property type="entry name" value="Glyco_hydro_13_N"/>
</dbReference>
<dbReference type="InterPro" id="IPR013780">
    <property type="entry name" value="Glyco_hydro_b"/>
</dbReference>
<dbReference type="InterPro" id="IPR017853">
    <property type="entry name" value="Glycoside_hydrolase_SF"/>
</dbReference>
<dbReference type="InterPro" id="IPR013783">
    <property type="entry name" value="Ig-like_fold"/>
</dbReference>
<dbReference type="InterPro" id="IPR014756">
    <property type="entry name" value="Ig_E-set"/>
</dbReference>
<dbReference type="NCBIfam" id="TIGR01515">
    <property type="entry name" value="branching_enzym"/>
    <property type="match status" value="1"/>
</dbReference>
<dbReference type="NCBIfam" id="NF003811">
    <property type="entry name" value="PRK05402.1"/>
    <property type="match status" value="1"/>
</dbReference>
<dbReference type="NCBIfam" id="NF008967">
    <property type="entry name" value="PRK12313.1"/>
    <property type="match status" value="1"/>
</dbReference>
<dbReference type="PANTHER" id="PTHR43651">
    <property type="entry name" value="1,4-ALPHA-GLUCAN-BRANCHING ENZYME"/>
    <property type="match status" value="1"/>
</dbReference>
<dbReference type="PANTHER" id="PTHR43651:SF3">
    <property type="entry name" value="1,4-ALPHA-GLUCAN-BRANCHING ENZYME"/>
    <property type="match status" value="1"/>
</dbReference>
<dbReference type="Pfam" id="PF00128">
    <property type="entry name" value="Alpha-amylase"/>
    <property type="match status" value="1"/>
</dbReference>
<dbReference type="Pfam" id="PF02806">
    <property type="entry name" value="Alpha-amylase_C"/>
    <property type="match status" value="1"/>
</dbReference>
<dbReference type="Pfam" id="PF02922">
    <property type="entry name" value="CBM_48"/>
    <property type="match status" value="1"/>
</dbReference>
<dbReference type="Pfam" id="PF22019">
    <property type="entry name" value="GlgB_N"/>
    <property type="match status" value="1"/>
</dbReference>
<dbReference type="PIRSF" id="PIRSF000463">
    <property type="entry name" value="GlgB"/>
    <property type="match status" value="1"/>
</dbReference>
<dbReference type="SMART" id="SM00642">
    <property type="entry name" value="Aamy"/>
    <property type="match status" value="1"/>
</dbReference>
<dbReference type="SUPFAM" id="SSF51445">
    <property type="entry name" value="(Trans)glycosidases"/>
    <property type="match status" value="1"/>
</dbReference>
<dbReference type="SUPFAM" id="SSF81296">
    <property type="entry name" value="E set domains"/>
    <property type="match status" value="2"/>
</dbReference>
<dbReference type="SUPFAM" id="SSF51011">
    <property type="entry name" value="Glycosyl hydrolase domain"/>
    <property type="match status" value="1"/>
</dbReference>
<evidence type="ECO:0000255" key="1">
    <source>
        <dbReference type="HAMAP-Rule" id="MF_00685"/>
    </source>
</evidence>
<accession>Q8D4P0</accession>
<gene>
    <name evidence="1" type="primary">glgB</name>
    <name type="ordered locus">VV2_1252</name>
</gene>
<name>GLGB_VIBVU</name>
<reference key="1">
    <citation type="submission" date="2002-12" db="EMBL/GenBank/DDBJ databases">
        <title>Complete genome sequence of Vibrio vulnificus CMCP6.</title>
        <authorList>
            <person name="Rhee J.H."/>
            <person name="Kim S.Y."/>
            <person name="Chung S.S."/>
            <person name="Kim J.J."/>
            <person name="Moon Y.H."/>
            <person name="Jeong H."/>
            <person name="Choy H.E."/>
        </authorList>
    </citation>
    <scope>NUCLEOTIDE SEQUENCE [LARGE SCALE GENOMIC DNA]</scope>
    <source>
        <strain>CMCP6</strain>
    </source>
</reference>
<organism>
    <name type="scientific">Vibrio vulnificus (strain CMCP6)</name>
    <dbReference type="NCBI Taxonomy" id="216895"/>
    <lineage>
        <taxon>Bacteria</taxon>
        <taxon>Pseudomonadati</taxon>
        <taxon>Pseudomonadota</taxon>
        <taxon>Gammaproteobacteria</taxon>
        <taxon>Vibrionales</taxon>
        <taxon>Vibrionaceae</taxon>
        <taxon>Vibrio</taxon>
    </lineage>
</organism>